<sequence length="316" mass="36394">MSFASETKKELTNLEMKECCEKAELSALLRMNGSLSFSNRRLSIDIQTENAAIARRIYTLLKKGYDVTVELLVRKKMRLKKNNVYIVRLVEKSREILADLHIVRDDFSFIRNISQELIEKKCCKRSYLRGAFLAGGSVNNPETSSYHLEIFSLYKEHNDAICELMNGFDLNSKTLERRKGYITYLKEAEKITEFLNIIGAHNALLRFEDIRIVRDMRNSVNRLVNCETANLNKTIGAALRQIENIRYIDETVGLDILPDKLQEIAQLRRDYQDVTLKELGEMVSGGKISKSGINHRLRKIDEIAEKLRAGETLVKK</sequence>
<accession>B7HEF4</accession>
<name>WHIA_BACC4</name>
<comment type="function">
    <text evidence="1">Involved in cell division and chromosome segregation.</text>
</comment>
<comment type="similarity">
    <text evidence="1">Belongs to the WhiA family.</text>
</comment>
<protein>
    <recommendedName>
        <fullName evidence="1">Probable cell division protein WhiA</fullName>
    </recommendedName>
</protein>
<organism>
    <name type="scientific">Bacillus cereus (strain B4264)</name>
    <dbReference type="NCBI Taxonomy" id="405532"/>
    <lineage>
        <taxon>Bacteria</taxon>
        <taxon>Bacillati</taxon>
        <taxon>Bacillota</taxon>
        <taxon>Bacilli</taxon>
        <taxon>Bacillales</taxon>
        <taxon>Bacillaceae</taxon>
        <taxon>Bacillus</taxon>
        <taxon>Bacillus cereus group</taxon>
    </lineage>
</organism>
<dbReference type="EMBL" id="CP001176">
    <property type="protein sequence ID" value="ACK63597.1"/>
    <property type="molecule type" value="Genomic_DNA"/>
</dbReference>
<dbReference type="RefSeq" id="WP_000006558.1">
    <property type="nucleotide sequence ID" value="NZ_VEHB01000004.1"/>
</dbReference>
<dbReference type="SMR" id="B7HEF4"/>
<dbReference type="KEGG" id="bcb:BCB4264_A5272"/>
<dbReference type="HOGENOM" id="CLU_053282_0_0_9"/>
<dbReference type="Proteomes" id="UP000007096">
    <property type="component" value="Chromosome"/>
</dbReference>
<dbReference type="GO" id="GO:0003677">
    <property type="term" value="F:DNA binding"/>
    <property type="evidence" value="ECO:0007669"/>
    <property type="project" value="UniProtKB-UniRule"/>
</dbReference>
<dbReference type="GO" id="GO:0051301">
    <property type="term" value="P:cell division"/>
    <property type="evidence" value="ECO:0007669"/>
    <property type="project" value="UniProtKB-UniRule"/>
</dbReference>
<dbReference type="GO" id="GO:0043937">
    <property type="term" value="P:regulation of sporulation"/>
    <property type="evidence" value="ECO:0007669"/>
    <property type="project" value="InterPro"/>
</dbReference>
<dbReference type="FunFam" id="3.10.28.10:FF:000002">
    <property type="entry name" value="Probable cell division protein WhiA"/>
    <property type="match status" value="1"/>
</dbReference>
<dbReference type="Gene3D" id="3.10.28.10">
    <property type="entry name" value="Homing endonucleases"/>
    <property type="match status" value="1"/>
</dbReference>
<dbReference type="HAMAP" id="MF_01420">
    <property type="entry name" value="HTH_type_WhiA"/>
    <property type="match status" value="1"/>
</dbReference>
<dbReference type="InterPro" id="IPR027434">
    <property type="entry name" value="Homing_endonucl"/>
</dbReference>
<dbReference type="InterPro" id="IPR018478">
    <property type="entry name" value="Sporu_reg_WhiA_N_dom"/>
</dbReference>
<dbReference type="InterPro" id="IPR003802">
    <property type="entry name" value="Sporulation_regulator_WhiA"/>
</dbReference>
<dbReference type="InterPro" id="IPR023054">
    <property type="entry name" value="Sporulation_regulator_WhiA_C"/>
</dbReference>
<dbReference type="InterPro" id="IPR039518">
    <property type="entry name" value="WhiA_LAGLIDADG_dom"/>
</dbReference>
<dbReference type="NCBIfam" id="TIGR00647">
    <property type="entry name" value="DNA_bind_WhiA"/>
    <property type="match status" value="1"/>
</dbReference>
<dbReference type="PANTHER" id="PTHR37307">
    <property type="entry name" value="CELL DIVISION PROTEIN WHIA-RELATED"/>
    <property type="match status" value="1"/>
</dbReference>
<dbReference type="PANTHER" id="PTHR37307:SF1">
    <property type="entry name" value="CELL DIVISION PROTEIN WHIA-RELATED"/>
    <property type="match status" value="1"/>
</dbReference>
<dbReference type="Pfam" id="PF02650">
    <property type="entry name" value="HTH_WhiA"/>
    <property type="match status" value="1"/>
</dbReference>
<dbReference type="Pfam" id="PF14527">
    <property type="entry name" value="LAGLIDADG_WhiA"/>
    <property type="match status" value="1"/>
</dbReference>
<dbReference type="Pfam" id="PF10298">
    <property type="entry name" value="WhiA_N"/>
    <property type="match status" value="1"/>
</dbReference>
<dbReference type="SUPFAM" id="SSF55608">
    <property type="entry name" value="Homing endonucleases"/>
    <property type="match status" value="1"/>
</dbReference>
<gene>
    <name evidence="1" type="primary">whiA</name>
    <name type="ordered locus">BCB4264_A5272</name>
</gene>
<feature type="chain" id="PRO_0000376433" description="Probable cell division protein WhiA">
    <location>
        <begin position="1"/>
        <end position="316"/>
    </location>
</feature>
<feature type="DNA-binding region" description="H-T-H motif" evidence="1">
    <location>
        <begin position="275"/>
        <end position="309"/>
    </location>
</feature>
<proteinExistence type="inferred from homology"/>
<reference key="1">
    <citation type="submission" date="2008-10" db="EMBL/GenBank/DDBJ databases">
        <title>Genome sequence of Bacillus cereus B4264.</title>
        <authorList>
            <person name="Dodson R.J."/>
            <person name="Durkin A.S."/>
            <person name="Rosovitz M.J."/>
            <person name="Rasko D.A."/>
            <person name="Hoffmaster A."/>
            <person name="Ravel J."/>
            <person name="Sutton G."/>
        </authorList>
    </citation>
    <scope>NUCLEOTIDE SEQUENCE [LARGE SCALE GENOMIC DNA]</scope>
    <source>
        <strain>B4264</strain>
    </source>
</reference>
<keyword id="KW-0131">Cell cycle</keyword>
<keyword id="KW-0132">Cell division</keyword>
<keyword id="KW-0238">DNA-binding</keyword>
<evidence type="ECO:0000255" key="1">
    <source>
        <dbReference type="HAMAP-Rule" id="MF_01420"/>
    </source>
</evidence>